<proteinExistence type="inferred from homology"/>
<protein>
    <recommendedName>
        <fullName evidence="1">Probable transaldolase</fullName>
        <ecNumber evidence="1">2.2.1.2</ecNumber>
    </recommendedName>
</protein>
<gene>
    <name evidence="1" type="primary">tal</name>
    <name type="ordered locus">MmarC7_0553</name>
</gene>
<comment type="function">
    <text evidence="1">Transaldolase is important for the balance of metabolites in the pentose-phosphate pathway.</text>
</comment>
<comment type="catalytic activity">
    <reaction evidence="1">
        <text>D-sedoheptulose 7-phosphate + D-glyceraldehyde 3-phosphate = D-erythrose 4-phosphate + beta-D-fructose 6-phosphate</text>
        <dbReference type="Rhea" id="RHEA:17053"/>
        <dbReference type="ChEBI" id="CHEBI:16897"/>
        <dbReference type="ChEBI" id="CHEBI:57483"/>
        <dbReference type="ChEBI" id="CHEBI:57634"/>
        <dbReference type="ChEBI" id="CHEBI:59776"/>
        <dbReference type="EC" id="2.2.1.2"/>
    </reaction>
</comment>
<comment type="pathway">
    <text evidence="1">Carbohydrate degradation; pentose phosphate pathway; D-glyceraldehyde 3-phosphate and beta-D-fructose 6-phosphate from D-ribose 5-phosphate and D-xylulose 5-phosphate (non-oxidative stage): step 2/3.</text>
</comment>
<comment type="subcellular location">
    <subcellularLocation>
        <location evidence="1">Cytoplasm</location>
    </subcellularLocation>
</comment>
<comment type="similarity">
    <text evidence="1">Belongs to the transaldolase family. Type 3B subfamily.</text>
</comment>
<organism>
    <name type="scientific">Methanococcus maripaludis (strain C7 / ATCC BAA-1331)</name>
    <dbReference type="NCBI Taxonomy" id="426368"/>
    <lineage>
        <taxon>Archaea</taxon>
        <taxon>Methanobacteriati</taxon>
        <taxon>Methanobacteriota</taxon>
        <taxon>Methanomada group</taxon>
        <taxon>Methanococci</taxon>
        <taxon>Methanococcales</taxon>
        <taxon>Methanococcaceae</taxon>
        <taxon>Methanococcus</taxon>
    </lineage>
</organism>
<name>TAL_METM7</name>
<accession>A6VGP5</accession>
<reference key="1">
    <citation type="submission" date="2007-06" db="EMBL/GenBank/DDBJ databases">
        <title>Complete sequence of Methanococcus maripaludis C7.</title>
        <authorList>
            <consortium name="US DOE Joint Genome Institute"/>
            <person name="Copeland A."/>
            <person name="Lucas S."/>
            <person name="Lapidus A."/>
            <person name="Barry K."/>
            <person name="Glavina del Rio T."/>
            <person name="Dalin E."/>
            <person name="Tice H."/>
            <person name="Pitluck S."/>
            <person name="Clum A."/>
            <person name="Schmutz J."/>
            <person name="Larimer F."/>
            <person name="Land M."/>
            <person name="Hauser L."/>
            <person name="Kyrpides N."/>
            <person name="Anderson I."/>
            <person name="Sieprawska-Lupa M."/>
            <person name="Whitman W.B."/>
            <person name="Richardson P."/>
        </authorList>
    </citation>
    <scope>NUCLEOTIDE SEQUENCE [LARGE SCALE GENOMIC DNA]</scope>
    <source>
        <strain>C7 / ATCC BAA-1331</strain>
    </source>
</reference>
<feature type="chain" id="PRO_1000060471" description="Probable transaldolase">
    <location>
        <begin position="1"/>
        <end position="215"/>
    </location>
</feature>
<feature type="active site" description="Schiff-base intermediate with substrate" evidence="1">
    <location>
        <position position="83"/>
    </location>
</feature>
<evidence type="ECO:0000255" key="1">
    <source>
        <dbReference type="HAMAP-Rule" id="MF_00494"/>
    </source>
</evidence>
<keyword id="KW-0963">Cytoplasm</keyword>
<keyword id="KW-0570">Pentose shunt</keyword>
<keyword id="KW-0704">Schiff base</keyword>
<keyword id="KW-0808">Transferase</keyword>
<dbReference type="EC" id="2.2.1.2" evidence="1"/>
<dbReference type="EMBL" id="CP000745">
    <property type="protein sequence ID" value="ABR65621.1"/>
    <property type="molecule type" value="Genomic_DNA"/>
</dbReference>
<dbReference type="SMR" id="A6VGP5"/>
<dbReference type="STRING" id="426368.MmarC7_0553"/>
<dbReference type="KEGG" id="mmz:MmarC7_0553"/>
<dbReference type="eggNOG" id="arCOG05061">
    <property type="taxonomic scope" value="Archaea"/>
</dbReference>
<dbReference type="HOGENOM" id="CLU_079764_0_0_2"/>
<dbReference type="OrthoDB" id="6661at2157"/>
<dbReference type="UniPathway" id="UPA00115">
    <property type="reaction ID" value="UER00414"/>
</dbReference>
<dbReference type="GO" id="GO:0005737">
    <property type="term" value="C:cytoplasm"/>
    <property type="evidence" value="ECO:0007669"/>
    <property type="project" value="UniProtKB-SubCell"/>
</dbReference>
<dbReference type="GO" id="GO:0016832">
    <property type="term" value="F:aldehyde-lyase activity"/>
    <property type="evidence" value="ECO:0007669"/>
    <property type="project" value="InterPro"/>
</dbReference>
<dbReference type="GO" id="GO:0004801">
    <property type="term" value="F:transaldolase activity"/>
    <property type="evidence" value="ECO:0007669"/>
    <property type="project" value="UniProtKB-UniRule"/>
</dbReference>
<dbReference type="GO" id="GO:0005975">
    <property type="term" value="P:carbohydrate metabolic process"/>
    <property type="evidence" value="ECO:0007669"/>
    <property type="project" value="InterPro"/>
</dbReference>
<dbReference type="GO" id="GO:0006098">
    <property type="term" value="P:pentose-phosphate shunt"/>
    <property type="evidence" value="ECO:0007669"/>
    <property type="project" value="UniProtKB-UniRule"/>
</dbReference>
<dbReference type="CDD" id="cd00956">
    <property type="entry name" value="Transaldolase_FSA"/>
    <property type="match status" value="1"/>
</dbReference>
<dbReference type="FunFam" id="3.20.20.70:FF:000018">
    <property type="entry name" value="Probable transaldolase"/>
    <property type="match status" value="1"/>
</dbReference>
<dbReference type="Gene3D" id="3.20.20.70">
    <property type="entry name" value="Aldolase class I"/>
    <property type="match status" value="1"/>
</dbReference>
<dbReference type="HAMAP" id="MF_00494">
    <property type="entry name" value="Transaldolase_3b"/>
    <property type="match status" value="1"/>
</dbReference>
<dbReference type="InterPro" id="IPR013785">
    <property type="entry name" value="Aldolase_TIM"/>
</dbReference>
<dbReference type="InterPro" id="IPR001585">
    <property type="entry name" value="TAL/FSA"/>
</dbReference>
<dbReference type="InterPro" id="IPR022999">
    <property type="entry name" value="Transaldolase_3B"/>
</dbReference>
<dbReference type="InterPro" id="IPR004731">
    <property type="entry name" value="Transaldolase_3B/F6P_aldolase"/>
</dbReference>
<dbReference type="InterPro" id="IPR018225">
    <property type="entry name" value="Transaldolase_AS"/>
</dbReference>
<dbReference type="InterPro" id="IPR033919">
    <property type="entry name" value="TSA/FSA_arc/bac"/>
</dbReference>
<dbReference type="NCBIfam" id="TIGR00875">
    <property type="entry name" value="fsa_talC_mipB"/>
    <property type="match status" value="1"/>
</dbReference>
<dbReference type="PANTHER" id="PTHR10683:SF40">
    <property type="entry name" value="FRUCTOSE-6-PHOSPHATE ALDOLASE 1-RELATED"/>
    <property type="match status" value="1"/>
</dbReference>
<dbReference type="PANTHER" id="PTHR10683">
    <property type="entry name" value="TRANSALDOLASE"/>
    <property type="match status" value="1"/>
</dbReference>
<dbReference type="Pfam" id="PF00923">
    <property type="entry name" value="TAL_FSA"/>
    <property type="match status" value="1"/>
</dbReference>
<dbReference type="SUPFAM" id="SSF51569">
    <property type="entry name" value="Aldolase"/>
    <property type="match status" value="1"/>
</dbReference>
<dbReference type="PROSITE" id="PS01054">
    <property type="entry name" value="TRANSALDOLASE_1"/>
    <property type="match status" value="1"/>
</dbReference>
<sequence length="215" mass="23482">MKFFLDTANVEKIKEFNALGLVDGVTTNPSLIKKEGRDFYEVIKEICAIVDGPVSAEVIALDAEGMVKEARELVKLAENVVVKIPMTKEGMKAVNILSKEGIKTNVTLIFSANQALLAAKAGASYVSPFVGRLDDVGQDGMFLISEVMQVFSAYGIETEVIVASVRHPIHVIESAKMGADIATIPFDVLDKLFNHPLTDNGIEKFLADWEAHMNR</sequence>